<organism>
    <name type="scientific">Streptococcus pneumoniae serotype 19F (strain G54)</name>
    <dbReference type="NCBI Taxonomy" id="512566"/>
    <lineage>
        <taxon>Bacteria</taxon>
        <taxon>Bacillati</taxon>
        <taxon>Bacillota</taxon>
        <taxon>Bacilli</taxon>
        <taxon>Lactobacillales</taxon>
        <taxon>Streptococcaceae</taxon>
        <taxon>Streptococcus</taxon>
    </lineage>
</organism>
<feature type="chain" id="PRO_1000126104" description="Glycogen synthase">
    <location>
        <begin position="1"/>
        <end position="477"/>
    </location>
</feature>
<feature type="binding site" evidence="1">
    <location>
        <position position="15"/>
    </location>
    <ligand>
        <name>ADP-alpha-D-glucose</name>
        <dbReference type="ChEBI" id="CHEBI:57498"/>
    </ligand>
</feature>
<gene>
    <name evidence="1" type="primary">glgA</name>
    <name type="ordered locus">SPG_1042</name>
</gene>
<protein>
    <recommendedName>
        <fullName evidence="1">Glycogen synthase</fullName>
        <ecNumber evidence="1">2.4.1.21</ecNumber>
    </recommendedName>
    <alternativeName>
        <fullName evidence="1">Starch [bacterial glycogen] synthase</fullName>
    </alternativeName>
</protein>
<name>GLGA_STRP4</name>
<accession>B5E4N6</accession>
<proteinExistence type="inferred from homology"/>
<sequence>MKILFVAAEGAPFSKTGGLGDVIGALPKSLVKAGHEVAVILPYYDMVEAKFGNQIEDVLHFEVSVGWRRQYCGIKKTVLNGVTFYFIDNQYYFFRGHVYGDFDDGERFAFFQLAAIEAMERIDFIPDLLHVHDYHTAMIPFLLKEKYRWIQAYEDIETVLTIHNLEFQGQFSEGMLGDLFGVGLERYADGTLRWNNCLNWMKAGILYANRVSTVSPSYAHEIMTSQFGCNLDQILKMESGKVSGIVNGIDADLYNPQTDALLDYHFNQEDLSGKAKNKAKLQERVGLPVRXXXPLVGIVSRLTRQKGFDVVVESLHHILQEDVQIVLLGTGDPAFEGAFSWFAQIYPDKLSTNITFDVKLAQEIYAACDLFLMPSRFEPCGLSQMMAMRYGTLPLVHEVGGLRDTVRAFNPIEGSGTGFSFDNLSPYWLNWTFQTALDLYRNHPDIWRNLQKQAMESDFSWDTACKSYLDLYHSLVN</sequence>
<reference key="1">
    <citation type="journal article" date="2001" name="Microb. Drug Resist.">
        <title>Annotated draft genomic sequence from a Streptococcus pneumoniae type 19F clinical isolate.</title>
        <authorList>
            <person name="Dopazo J."/>
            <person name="Mendoza A."/>
            <person name="Herrero J."/>
            <person name="Caldara F."/>
            <person name="Humbert Y."/>
            <person name="Friedli L."/>
            <person name="Guerrier M."/>
            <person name="Grand-Schenk E."/>
            <person name="Gandin C."/>
            <person name="de Francesco M."/>
            <person name="Polissi A."/>
            <person name="Buell G."/>
            <person name="Feger G."/>
            <person name="Garcia E."/>
            <person name="Peitsch M."/>
            <person name="Garcia-Bustos J.F."/>
        </authorList>
    </citation>
    <scope>NUCLEOTIDE SEQUENCE [LARGE SCALE GENOMIC DNA]</scope>
    <source>
        <strain>G54</strain>
    </source>
</reference>
<reference key="2">
    <citation type="submission" date="2008-03" db="EMBL/GenBank/DDBJ databases">
        <title>Pneumococcal beta glucoside metabolism investigated by whole genome comparison.</title>
        <authorList>
            <person name="Mulas L."/>
            <person name="Trappetti C."/>
            <person name="Hakenbeck R."/>
            <person name="Iannelli F."/>
            <person name="Pozzi G."/>
            <person name="Davidsen T.M."/>
            <person name="Tettelin H."/>
            <person name="Oggioni M."/>
        </authorList>
    </citation>
    <scope>NUCLEOTIDE SEQUENCE [LARGE SCALE GENOMIC DNA]</scope>
    <source>
        <strain>G54</strain>
    </source>
</reference>
<dbReference type="EC" id="2.4.1.21" evidence="1"/>
<dbReference type="EMBL" id="CP001015">
    <property type="protein sequence ID" value="ACF56202.1"/>
    <property type="molecule type" value="Genomic_DNA"/>
</dbReference>
<dbReference type="CAZy" id="GT5">
    <property type="family name" value="Glycosyltransferase Family 5"/>
</dbReference>
<dbReference type="KEGG" id="spx:SPG_1042"/>
<dbReference type="HOGENOM" id="CLU_009583_18_2_9"/>
<dbReference type="UniPathway" id="UPA00164"/>
<dbReference type="GO" id="GO:0009011">
    <property type="term" value="F:alpha-1,4-glucan glucosyltransferase (ADP-glucose donor) activity"/>
    <property type="evidence" value="ECO:0007669"/>
    <property type="project" value="UniProtKB-UniRule"/>
</dbReference>
<dbReference type="GO" id="GO:0004373">
    <property type="term" value="F:alpha-1,4-glucan glucosyltransferase (UDP-glucose donor) activity"/>
    <property type="evidence" value="ECO:0007669"/>
    <property type="project" value="InterPro"/>
</dbReference>
<dbReference type="GO" id="GO:0005978">
    <property type="term" value="P:glycogen biosynthetic process"/>
    <property type="evidence" value="ECO:0007669"/>
    <property type="project" value="UniProtKB-UniRule"/>
</dbReference>
<dbReference type="CDD" id="cd03791">
    <property type="entry name" value="GT5_Glycogen_synthase_DULL1-like"/>
    <property type="match status" value="1"/>
</dbReference>
<dbReference type="Gene3D" id="3.40.50.2000">
    <property type="entry name" value="Glycogen Phosphorylase B"/>
    <property type="match status" value="2"/>
</dbReference>
<dbReference type="HAMAP" id="MF_00484">
    <property type="entry name" value="Glycogen_synth"/>
    <property type="match status" value="1"/>
</dbReference>
<dbReference type="InterPro" id="IPR001296">
    <property type="entry name" value="Glyco_trans_1"/>
</dbReference>
<dbReference type="InterPro" id="IPR011835">
    <property type="entry name" value="GS/SS"/>
</dbReference>
<dbReference type="InterPro" id="IPR013534">
    <property type="entry name" value="Starch_synth_cat_dom"/>
</dbReference>
<dbReference type="NCBIfam" id="TIGR02095">
    <property type="entry name" value="glgA"/>
    <property type="match status" value="1"/>
</dbReference>
<dbReference type="NCBIfam" id="NF001898">
    <property type="entry name" value="PRK00654.1-1"/>
    <property type="match status" value="1"/>
</dbReference>
<dbReference type="PANTHER" id="PTHR45825:SF11">
    <property type="entry name" value="ALPHA AMYLASE DOMAIN-CONTAINING PROTEIN"/>
    <property type="match status" value="1"/>
</dbReference>
<dbReference type="PANTHER" id="PTHR45825">
    <property type="entry name" value="GRANULE-BOUND STARCH SYNTHASE 1, CHLOROPLASTIC/AMYLOPLASTIC"/>
    <property type="match status" value="1"/>
</dbReference>
<dbReference type="Pfam" id="PF08323">
    <property type="entry name" value="Glyco_transf_5"/>
    <property type="match status" value="1"/>
</dbReference>
<dbReference type="Pfam" id="PF00534">
    <property type="entry name" value="Glycos_transf_1"/>
    <property type="match status" value="1"/>
</dbReference>
<dbReference type="SUPFAM" id="SSF53756">
    <property type="entry name" value="UDP-Glycosyltransferase/glycogen phosphorylase"/>
    <property type="match status" value="1"/>
</dbReference>
<keyword id="KW-0320">Glycogen biosynthesis</keyword>
<keyword id="KW-0328">Glycosyltransferase</keyword>
<keyword id="KW-0808">Transferase</keyword>
<evidence type="ECO:0000255" key="1">
    <source>
        <dbReference type="HAMAP-Rule" id="MF_00484"/>
    </source>
</evidence>
<comment type="function">
    <text evidence="1">Synthesizes alpha-1,4-glucan chains using ADP-glucose.</text>
</comment>
<comment type="catalytic activity">
    <reaction evidence="1">
        <text>[(1-&gt;4)-alpha-D-glucosyl](n) + ADP-alpha-D-glucose = [(1-&gt;4)-alpha-D-glucosyl](n+1) + ADP + H(+)</text>
        <dbReference type="Rhea" id="RHEA:18189"/>
        <dbReference type="Rhea" id="RHEA-COMP:9584"/>
        <dbReference type="Rhea" id="RHEA-COMP:9587"/>
        <dbReference type="ChEBI" id="CHEBI:15378"/>
        <dbReference type="ChEBI" id="CHEBI:15444"/>
        <dbReference type="ChEBI" id="CHEBI:57498"/>
        <dbReference type="ChEBI" id="CHEBI:456216"/>
        <dbReference type="EC" id="2.4.1.21"/>
    </reaction>
</comment>
<comment type="pathway">
    <text evidence="1">Glycan biosynthesis; glycogen biosynthesis.</text>
</comment>
<comment type="similarity">
    <text evidence="1">Belongs to the glycosyltransferase 1 family. Bacterial/plant glycogen synthase subfamily.</text>
</comment>